<keyword id="KW-0029">Amino-acid transport</keyword>
<keyword id="KW-1015">Disulfide bond</keyword>
<keyword id="KW-0325">Glycoprotein</keyword>
<keyword id="KW-0472">Membrane</keyword>
<keyword id="KW-1185">Reference proteome</keyword>
<keyword id="KW-0812">Transmembrane</keyword>
<keyword id="KW-1133">Transmembrane helix</keyword>
<keyword id="KW-0813">Transport</keyword>
<keyword id="KW-0926">Vacuole</keyword>
<gene>
    <name type="ORF">TA12005</name>
</gene>
<name>CRT_THEAN</name>
<accession>Q4UDS9</accession>
<reference key="1">
    <citation type="journal article" date="2005" name="Science">
        <title>Genome of the host-cell transforming parasite Theileria annulata compared with T. parva.</title>
        <authorList>
            <person name="Pain A."/>
            <person name="Renauld H."/>
            <person name="Berriman M."/>
            <person name="Murphy L."/>
            <person name="Yeats C.A."/>
            <person name="Weir W."/>
            <person name="Kerhornou A."/>
            <person name="Aslett M."/>
            <person name="Bishop R."/>
            <person name="Bouchier C."/>
            <person name="Cochet M."/>
            <person name="Coulson R.M.R."/>
            <person name="Cronin A."/>
            <person name="de Villiers E.P."/>
            <person name="Fraser A."/>
            <person name="Fosker N."/>
            <person name="Gardner M."/>
            <person name="Goble A."/>
            <person name="Griffiths-Jones S."/>
            <person name="Harris D.E."/>
            <person name="Katzer F."/>
            <person name="Larke N."/>
            <person name="Lord A."/>
            <person name="Maser P."/>
            <person name="McKellar S."/>
            <person name="Mooney P."/>
            <person name="Morton F."/>
            <person name="Nene V."/>
            <person name="O'Neil S."/>
            <person name="Price C."/>
            <person name="Quail M.A."/>
            <person name="Rabbinowitsch E."/>
            <person name="Rawlings N.D."/>
            <person name="Rutter S."/>
            <person name="Saunders D."/>
            <person name="Seeger K."/>
            <person name="Shah T."/>
            <person name="Squares R."/>
            <person name="Squares S."/>
            <person name="Tivey A."/>
            <person name="Walker A.R."/>
            <person name="Woodward J."/>
            <person name="Dobbelaere D.A.E."/>
            <person name="Langsley G."/>
            <person name="Rajandream M.A."/>
            <person name="McKeever D."/>
            <person name="Shiels B."/>
            <person name="Tait A."/>
            <person name="Barrell B.G."/>
            <person name="Hall N."/>
        </authorList>
    </citation>
    <scope>NUCLEOTIDE SEQUENCE [LARGE SCALE GENOMIC DNA]</scope>
    <source>
        <strain>Ankara</strain>
    </source>
</reference>
<evidence type="ECO:0000250" key="1">
    <source>
        <dbReference type="UniProtKB" id="Q9N623"/>
    </source>
</evidence>
<evidence type="ECO:0000250" key="2">
    <source>
        <dbReference type="UniProtKB" id="W7FI62"/>
    </source>
</evidence>
<evidence type="ECO:0000255" key="3"/>
<evidence type="ECO:0000256" key="4">
    <source>
        <dbReference type="SAM" id="MobiDB-lite"/>
    </source>
</evidence>
<evidence type="ECO:0000305" key="5"/>
<protein>
    <recommendedName>
        <fullName>Putative chloroquine resistance transporter</fullName>
    </recommendedName>
    <alternativeName>
        <fullName>Probable transporter cg10</fullName>
    </alternativeName>
</protein>
<organism>
    <name type="scientific">Theileria annulata</name>
    <dbReference type="NCBI Taxonomy" id="5874"/>
    <lineage>
        <taxon>Eukaryota</taxon>
        <taxon>Sar</taxon>
        <taxon>Alveolata</taxon>
        <taxon>Apicomplexa</taxon>
        <taxon>Aconoidasida</taxon>
        <taxon>Piroplasmida</taxon>
        <taxon>Theileriidae</taxon>
        <taxon>Theileria</taxon>
    </lineage>
</organism>
<comment type="function">
    <text evidence="1">Nutrient transporter (By similarity). Involved in maintaining the osmotic homeostasis of the digestive vacuole (By similarity).</text>
</comment>
<comment type="subcellular location">
    <subcellularLocation>
        <location evidence="1">Vacuole membrane</location>
        <topology evidence="3">Multi-pass membrane protein</topology>
    </subcellularLocation>
</comment>
<comment type="similarity">
    <text evidence="5">Belongs to the CRT-like transporter family.</text>
</comment>
<sequence length="430" mass="48721">MLKEGSSLDLSASSSSGTLRSDNSFGNSPLDRITSLLILIYKSIRACFKWIYSKSFGIICILFVILDVLTTVFFKRFIDHTKNYVMFTIQVIIFTFWIIVCCIAILCFLFNREYMKRHFNVRPLVFLGFLDMLSTGLSANGSAHTSGLMLVLLGQISVPLTMVSCKLILSKKYHHYQYISSAIILTFAVLKPILNRTDTTDNRFYNNMLYLLASVPDSIASALREKQYTSKFFHVVKYQFFGFLFHFFYNILYTLLFTLPFNSVKGYFDSLYKLCVNGYKCIFFGVNTITENCGPTLIPTCDNCLEAFKIYCLYILFSSAIRVAYVFIMLDGSVTFTLLLGTVKVPLTSIAFSLRFIAGDSTTSFNLLDVVCFLGIVAGLLLYALGSKKIQEETDLLESPLIDDAESEHELLSTGTEKLMRSEICHDLFT</sequence>
<feature type="chain" id="PRO_0000385362" description="Putative chloroquine resistance transporter">
    <location>
        <begin position="1"/>
        <end position="430"/>
    </location>
</feature>
<feature type="topological domain" description="Cytoplasmic" evidence="5">
    <location>
        <begin position="1"/>
        <end position="53"/>
    </location>
</feature>
<feature type="transmembrane region" description="Helical" evidence="3">
    <location>
        <begin position="54"/>
        <end position="74"/>
    </location>
</feature>
<feature type="topological domain" description="Vacuolar" evidence="5">
    <location>
        <begin position="75"/>
        <end position="88"/>
    </location>
</feature>
<feature type="transmembrane region" description="Helical" evidence="3">
    <location>
        <begin position="89"/>
        <end position="109"/>
    </location>
</feature>
<feature type="topological domain" description="Cytoplasmic" evidence="5">
    <location>
        <begin position="110"/>
        <end position="122"/>
    </location>
</feature>
<feature type="transmembrane region" description="Helical" evidence="3">
    <location>
        <begin position="123"/>
        <end position="143"/>
    </location>
</feature>
<feature type="topological domain" description="Vacuolar" evidence="5">
    <location>
        <begin position="144"/>
        <end position="147"/>
    </location>
</feature>
<feature type="transmembrane region" description="Helical" evidence="3">
    <location>
        <begin position="148"/>
        <end position="168"/>
    </location>
</feature>
<feature type="topological domain" description="Cytoplasmic" evidence="5">
    <location>
        <begin position="169"/>
        <end position="173"/>
    </location>
</feature>
<feature type="transmembrane region" description="Helical" evidence="3">
    <location>
        <begin position="174"/>
        <end position="194"/>
    </location>
</feature>
<feature type="topological domain" description="Vacuolar" evidence="5">
    <location>
        <begin position="195"/>
        <end position="206"/>
    </location>
</feature>
<feature type="transmembrane region" description="Helical" evidence="3">
    <location>
        <begin position="207"/>
        <end position="223"/>
    </location>
</feature>
<feature type="topological domain" description="Cytoplasmic" evidence="5">
    <location>
        <begin position="224"/>
        <end position="239"/>
    </location>
</feature>
<feature type="transmembrane region" description="Helical" evidence="3">
    <location>
        <begin position="240"/>
        <end position="260"/>
    </location>
</feature>
<feature type="topological domain" description="Vacuolar" evidence="5">
    <location>
        <begin position="261"/>
        <end position="306"/>
    </location>
</feature>
<feature type="transmembrane region" description="Helical" evidence="3">
    <location>
        <begin position="307"/>
        <end position="329"/>
    </location>
</feature>
<feature type="topological domain" description="Cytoplasmic" evidence="5">
    <location>
        <begin position="330"/>
        <end position="335"/>
    </location>
</feature>
<feature type="transmembrane region" description="Helical" evidence="3">
    <location>
        <begin position="336"/>
        <end position="358"/>
    </location>
</feature>
<feature type="topological domain" description="Vacuolar" evidence="5">
    <location>
        <begin position="359"/>
        <end position="364"/>
    </location>
</feature>
<feature type="transmembrane region" description="Helical" evidence="3">
    <location>
        <begin position="365"/>
        <end position="385"/>
    </location>
</feature>
<feature type="topological domain" description="Cytoplasmic" evidence="5">
    <location>
        <begin position="386"/>
        <end position="430"/>
    </location>
</feature>
<feature type="region of interest" description="Disordered" evidence="4">
    <location>
        <begin position="1"/>
        <end position="22"/>
    </location>
</feature>
<feature type="compositionally biased region" description="Low complexity" evidence="4">
    <location>
        <begin position="7"/>
        <end position="21"/>
    </location>
</feature>
<feature type="glycosylation site" description="N-linked (GlcNAc...) asparagine" evidence="3">
    <location>
        <position position="195"/>
    </location>
</feature>
<feature type="disulfide bond" evidence="2">
    <location>
        <begin position="281"/>
        <end position="304"/>
    </location>
</feature>
<feature type="disulfide bond" evidence="2">
    <location>
        <begin position="293"/>
        <end position="301"/>
    </location>
</feature>
<proteinExistence type="inferred from homology"/>
<dbReference type="EMBL" id="CR940348">
    <property type="protein sequence ID" value="CAI74760.1"/>
    <property type="molecule type" value="Genomic_DNA"/>
</dbReference>
<dbReference type="RefSeq" id="XP_952492.1">
    <property type="nucleotide sequence ID" value="XM_947399.1"/>
</dbReference>
<dbReference type="SMR" id="Q4UDS9"/>
<dbReference type="STRING" id="5874.Q4UDS9"/>
<dbReference type="GeneID" id="3861985"/>
<dbReference type="KEGG" id="tan:TA12005"/>
<dbReference type="VEuPathDB" id="PiroplasmaDB:TA12005"/>
<dbReference type="eggNOG" id="ENOG502QR5M">
    <property type="taxonomic scope" value="Eukaryota"/>
</dbReference>
<dbReference type="InParanoid" id="Q4UDS9"/>
<dbReference type="OMA" id="FAYIIPM"/>
<dbReference type="OrthoDB" id="416555at2759"/>
<dbReference type="Proteomes" id="UP000001950">
    <property type="component" value="Chromosome 2"/>
</dbReference>
<dbReference type="GO" id="GO:0005774">
    <property type="term" value="C:vacuolar membrane"/>
    <property type="evidence" value="ECO:0007669"/>
    <property type="project" value="UniProtKB-SubCell"/>
</dbReference>
<dbReference type="GO" id="GO:0042910">
    <property type="term" value="F:xenobiotic transmembrane transporter activity"/>
    <property type="evidence" value="ECO:0007669"/>
    <property type="project" value="InterPro"/>
</dbReference>
<dbReference type="GO" id="GO:0006865">
    <property type="term" value="P:amino acid transport"/>
    <property type="evidence" value="ECO:0007669"/>
    <property type="project" value="UniProtKB-KW"/>
</dbReference>
<dbReference type="InterPro" id="IPR013936">
    <property type="entry name" value="CRT-like"/>
</dbReference>
<dbReference type="InterPro" id="IPR017258">
    <property type="entry name" value="Transprt_Chloroquine"/>
</dbReference>
<dbReference type="PANTHER" id="PTHR31326">
    <property type="entry name" value="PROTEIN CLT2, CHLOROPLASTIC"/>
    <property type="match status" value="1"/>
</dbReference>
<dbReference type="PANTHER" id="PTHR31326:SF1">
    <property type="entry name" value="PROTEIN CLT2, CHLOROPLASTIC"/>
    <property type="match status" value="1"/>
</dbReference>
<dbReference type="Pfam" id="PF08627">
    <property type="entry name" value="CRT-like"/>
    <property type="match status" value="1"/>
</dbReference>
<dbReference type="PIRSF" id="PIRSF037671">
    <property type="entry name" value="Transprt_Chloroquine_res"/>
    <property type="match status" value="1"/>
</dbReference>